<organism>
    <name type="scientific">Mus musculus</name>
    <name type="common">Mouse</name>
    <dbReference type="NCBI Taxonomy" id="10090"/>
    <lineage>
        <taxon>Eukaryota</taxon>
        <taxon>Metazoa</taxon>
        <taxon>Chordata</taxon>
        <taxon>Craniata</taxon>
        <taxon>Vertebrata</taxon>
        <taxon>Euteleostomi</taxon>
        <taxon>Mammalia</taxon>
        <taxon>Eutheria</taxon>
        <taxon>Euarchontoglires</taxon>
        <taxon>Glires</taxon>
        <taxon>Rodentia</taxon>
        <taxon>Myomorpha</taxon>
        <taxon>Muroidea</taxon>
        <taxon>Muridae</taxon>
        <taxon>Murinae</taxon>
        <taxon>Mus</taxon>
        <taxon>Mus</taxon>
    </lineage>
</organism>
<comment type="subcellular location">
    <subcellularLocation>
        <location evidence="1">Cytoplasm</location>
    </subcellularLocation>
    <subcellularLocation>
        <location evidence="1">Nucleus</location>
    </subcellularLocation>
    <text evidence="1">Translocates to nuclear foci during heat shock.</text>
</comment>
<comment type="tissue specificity">
    <text evidence="4">Testis specific.</text>
</comment>
<comment type="developmental stage">
    <text evidence="4">Expressed notably in the spermatogenic cells from late pachytene spermatocyte stage till elongate spermatid stage.</text>
</comment>
<comment type="similarity">
    <text evidence="2">Belongs to the small heat shock protein (HSP20) family.</text>
</comment>
<reference key="1">
    <citation type="journal article" date="2001" name="Biochim. Biophys. Acta">
        <title>Characterization of two novel human small heat shock proteins: protein kinase-related HspB8 and testis-specific HspB9.</title>
        <authorList>
            <person name="Kappe G."/>
            <person name="Verschuure P."/>
            <person name="Philipsen R.L.A."/>
            <person name="Staalduinen A.A."/>
            <person name="Van de Boogaart P."/>
            <person name="Boelens W.C."/>
            <person name="de Jong W.W."/>
        </authorList>
    </citation>
    <scope>NUCLEOTIDE SEQUENCE</scope>
    <scope>TISSUE SPECIFICITY</scope>
    <scope>DEVELOPMENTAL STAGE</scope>
</reference>
<reference key="2">
    <citation type="journal article" date="2005" name="Science">
        <title>The transcriptional landscape of the mammalian genome.</title>
        <authorList>
            <person name="Carninci P."/>
            <person name="Kasukawa T."/>
            <person name="Katayama S."/>
            <person name="Gough J."/>
            <person name="Frith M.C."/>
            <person name="Maeda N."/>
            <person name="Oyama R."/>
            <person name="Ravasi T."/>
            <person name="Lenhard B."/>
            <person name="Wells C."/>
            <person name="Kodzius R."/>
            <person name="Shimokawa K."/>
            <person name="Bajic V.B."/>
            <person name="Brenner S.E."/>
            <person name="Batalov S."/>
            <person name="Forrest A.R."/>
            <person name="Zavolan M."/>
            <person name="Davis M.J."/>
            <person name="Wilming L.G."/>
            <person name="Aidinis V."/>
            <person name="Allen J.E."/>
            <person name="Ambesi-Impiombato A."/>
            <person name="Apweiler R."/>
            <person name="Aturaliya R.N."/>
            <person name="Bailey T.L."/>
            <person name="Bansal M."/>
            <person name="Baxter L."/>
            <person name="Beisel K.W."/>
            <person name="Bersano T."/>
            <person name="Bono H."/>
            <person name="Chalk A.M."/>
            <person name="Chiu K.P."/>
            <person name="Choudhary V."/>
            <person name="Christoffels A."/>
            <person name="Clutterbuck D.R."/>
            <person name="Crowe M.L."/>
            <person name="Dalla E."/>
            <person name="Dalrymple B.P."/>
            <person name="de Bono B."/>
            <person name="Della Gatta G."/>
            <person name="di Bernardo D."/>
            <person name="Down T."/>
            <person name="Engstrom P."/>
            <person name="Fagiolini M."/>
            <person name="Faulkner G."/>
            <person name="Fletcher C.F."/>
            <person name="Fukushima T."/>
            <person name="Furuno M."/>
            <person name="Futaki S."/>
            <person name="Gariboldi M."/>
            <person name="Georgii-Hemming P."/>
            <person name="Gingeras T.R."/>
            <person name="Gojobori T."/>
            <person name="Green R.E."/>
            <person name="Gustincich S."/>
            <person name="Harbers M."/>
            <person name="Hayashi Y."/>
            <person name="Hensch T.K."/>
            <person name="Hirokawa N."/>
            <person name="Hill D."/>
            <person name="Huminiecki L."/>
            <person name="Iacono M."/>
            <person name="Ikeo K."/>
            <person name="Iwama A."/>
            <person name="Ishikawa T."/>
            <person name="Jakt M."/>
            <person name="Kanapin A."/>
            <person name="Katoh M."/>
            <person name="Kawasawa Y."/>
            <person name="Kelso J."/>
            <person name="Kitamura H."/>
            <person name="Kitano H."/>
            <person name="Kollias G."/>
            <person name="Krishnan S.P."/>
            <person name="Kruger A."/>
            <person name="Kummerfeld S.K."/>
            <person name="Kurochkin I.V."/>
            <person name="Lareau L.F."/>
            <person name="Lazarevic D."/>
            <person name="Lipovich L."/>
            <person name="Liu J."/>
            <person name="Liuni S."/>
            <person name="McWilliam S."/>
            <person name="Madan Babu M."/>
            <person name="Madera M."/>
            <person name="Marchionni L."/>
            <person name="Matsuda H."/>
            <person name="Matsuzawa S."/>
            <person name="Miki H."/>
            <person name="Mignone F."/>
            <person name="Miyake S."/>
            <person name="Morris K."/>
            <person name="Mottagui-Tabar S."/>
            <person name="Mulder N."/>
            <person name="Nakano N."/>
            <person name="Nakauchi H."/>
            <person name="Ng P."/>
            <person name="Nilsson R."/>
            <person name="Nishiguchi S."/>
            <person name="Nishikawa S."/>
            <person name="Nori F."/>
            <person name="Ohara O."/>
            <person name="Okazaki Y."/>
            <person name="Orlando V."/>
            <person name="Pang K.C."/>
            <person name="Pavan W.J."/>
            <person name="Pavesi G."/>
            <person name="Pesole G."/>
            <person name="Petrovsky N."/>
            <person name="Piazza S."/>
            <person name="Reed J."/>
            <person name="Reid J.F."/>
            <person name="Ring B.Z."/>
            <person name="Ringwald M."/>
            <person name="Rost B."/>
            <person name="Ruan Y."/>
            <person name="Salzberg S.L."/>
            <person name="Sandelin A."/>
            <person name="Schneider C."/>
            <person name="Schoenbach C."/>
            <person name="Sekiguchi K."/>
            <person name="Semple C.A."/>
            <person name="Seno S."/>
            <person name="Sessa L."/>
            <person name="Sheng Y."/>
            <person name="Shibata Y."/>
            <person name="Shimada H."/>
            <person name="Shimada K."/>
            <person name="Silva D."/>
            <person name="Sinclair B."/>
            <person name="Sperling S."/>
            <person name="Stupka E."/>
            <person name="Sugiura K."/>
            <person name="Sultana R."/>
            <person name="Takenaka Y."/>
            <person name="Taki K."/>
            <person name="Tammoja K."/>
            <person name="Tan S.L."/>
            <person name="Tang S."/>
            <person name="Taylor M.S."/>
            <person name="Tegner J."/>
            <person name="Teichmann S.A."/>
            <person name="Ueda H.R."/>
            <person name="van Nimwegen E."/>
            <person name="Verardo R."/>
            <person name="Wei C.L."/>
            <person name="Yagi K."/>
            <person name="Yamanishi H."/>
            <person name="Zabarovsky E."/>
            <person name="Zhu S."/>
            <person name="Zimmer A."/>
            <person name="Hide W."/>
            <person name="Bult C."/>
            <person name="Grimmond S.M."/>
            <person name="Teasdale R.D."/>
            <person name="Liu E.T."/>
            <person name="Brusic V."/>
            <person name="Quackenbush J."/>
            <person name="Wahlestedt C."/>
            <person name="Mattick J.S."/>
            <person name="Hume D.A."/>
            <person name="Kai C."/>
            <person name="Sasaki D."/>
            <person name="Tomaru Y."/>
            <person name="Fukuda S."/>
            <person name="Kanamori-Katayama M."/>
            <person name="Suzuki M."/>
            <person name="Aoki J."/>
            <person name="Arakawa T."/>
            <person name="Iida J."/>
            <person name="Imamura K."/>
            <person name="Itoh M."/>
            <person name="Kato T."/>
            <person name="Kawaji H."/>
            <person name="Kawagashira N."/>
            <person name="Kawashima T."/>
            <person name="Kojima M."/>
            <person name="Kondo S."/>
            <person name="Konno H."/>
            <person name="Nakano K."/>
            <person name="Ninomiya N."/>
            <person name="Nishio T."/>
            <person name="Okada M."/>
            <person name="Plessy C."/>
            <person name="Shibata K."/>
            <person name="Shiraki T."/>
            <person name="Suzuki S."/>
            <person name="Tagami M."/>
            <person name="Waki K."/>
            <person name="Watahiki A."/>
            <person name="Okamura-Oho Y."/>
            <person name="Suzuki H."/>
            <person name="Kawai J."/>
            <person name="Hayashizaki Y."/>
        </authorList>
    </citation>
    <scope>NUCLEOTIDE SEQUENCE [LARGE SCALE MRNA]</scope>
    <source>
        <strain>C57BL/6J</strain>
        <tissue>Testis</tissue>
    </source>
</reference>
<reference key="3">
    <citation type="journal article" date="2009" name="PLoS Biol.">
        <title>Lineage-specific biology revealed by a finished genome assembly of the mouse.</title>
        <authorList>
            <person name="Church D.M."/>
            <person name="Goodstadt L."/>
            <person name="Hillier L.W."/>
            <person name="Zody M.C."/>
            <person name="Goldstein S."/>
            <person name="She X."/>
            <person name="Bult C.J."/>
            <person name="Agarwala R."/>
            <person name="Cherry J.L."/>
            <person name="DiCuccio M."/>
            <person name="Hlavina W."/>
            <person name="Kapustin Y."/>
            <person name="Meric P."/>
            <person name="Maglott D."/>
            <person name="Birtle Z."/>
            <person name="Marques A.C."/>
            <person name="Graves T."/>
            <person name="Zhou S."/>
            <person name="Teague B."/>
            <person name="Potamousis K."/>
            <person name="Churas C."/>
            <person name="Place M."/>
            <person name="Herschleb J."/>
            <person name="Runnheim R."/>
            <person name="Forrest D."/>
            <person name="Amos-Landgraf J."/>
            <person name="Schwartz D.C."/>
            <person name="Cheng Z."/>
            <person name="Lindblad-Toh K."/>
            <person name="Eichler E.E."/>
            <person name="Ponting C.P."/>
        </authorList>
    </citation>
    <scope>NUCLEOTIDE SEQUENCE [LARGE SCALE GENOMIC DNA]</scope>
    <source>
        <strain>C57BL/6J</strain>
    </source>
</reference>
<evidence type="ECO:0000250" key="1"/>
<evidence type="ECO:0000255" key="2">
    <source>
        <dbReference type="PROSITE-ProRule" id="PRU00285"/>
    </source>
</evidence>
<evidence type="ECO:0000256" key="3">
    <source>
        <dbReference type="SAM" id="MobiDB-lite"/>
    </source>
</evidence>
<evidence type="ECO:0000269" key="4">
    <source>
    </source>
</evidence>
<gene>
    <name type="primary">Hspb9</name>
</gene>
<sequence>MQRVGSSFSTGQREPGENRVASRCPSVALAERNQVATLPVRLLRDEVQGNGCEQPSFQIKVDAQGFAPEDLVVRIDGQNLTVTGQRQHESNDPSRGRYRMEQSVHRQMQLPPTLDPAAMTCSLTPSGHLWLRGQNKCLPPPEAQTGQSQKPRRGGPKSSLQNESVKNP</sequence>
<proteinExistence type="evidence at transcript level"/>
<accession>Q9DAM3</accession>
<accession>A2A5F2</accession>
<name>HSPB9_MOUSE</name>
<protein>
    <recommendedName>
        <fullName>Heat shock protein beta-9</fullName>
        <shortName>HspB9</shortName>
    </recommendedName>
</protein>
<feature type="chain" id="PRO_0000125951" description="Heat shock protein beta-9">
    <location>
        <begin position="1"/>
        <end position="168"/>
    </location>
</feature>
<feature type="domain" description="sHSP" evidence="2">
    <location>
        <begin position="38"/>
        <end position="151"/>
    </location>
</feature>
<feature type="region of interest" description="Disordered" evidence="3">
    <location>
        <begin position="1"/>
        <end position="25"/>
    </location>
</feature>
<feature type="region of interest" description="Disordered" evidence="3">
    <location>
        <begin position="83"/>
        <end position="104"/>
    </location>
</feature>
<feature type="region of interest" description="Disordered" evidence="3">
    <location>
        <begin position="129"/>
        <end position="168"/>
    </location>
</feature>
<feature type="compositionally biased region" description="Polar residues" evidence="3">
    <location>
        <begin position="1"/>
        <end position="12"/>
    </location>
</feature>
<feature type="compositionally biased region" description="Basic and acidic residues" evidence="3">
    <location>
        <begin position="86"/>
        <end position="104"/>
    </location>
</feature>
<feature type="compositionally biased region" description="Polar residues" evidence="3">
    <location>
        <begin position="158"/>
        <end position="168"/>
    </location>
</feature>
<keyword id="KW-0963">Cytoplasm</keyword>
<keyword id="KW-0539">Nucleus</keyword>
<keyword id="KW-1185">Reference proteome</keyword>
<keyword id="KW-0346">Stress response</keyword>
<dbReference type="EMBL" id="AJ302069">
    <property type="protein sequence ID" value="CAC35730.1"/>
    <property type="molecule type" value="Genomic_DNA"/>
</dbReference>
<dbReference type="EMBL" id="AK005714">
    <property type="protein sequence ID" value="BAB24201.1"/>
    <property type="molecule type" value="mRNA"/>
</dbReference>
<dbReference type="EMBL" id="AL591469">
    <property type="status" value="NOT_ANNOTATED_CDS"/>
    <property type="molecule type" value="Genomic_DNA"/>
</dbReference>
<dbReference type="CCDS" id="CCDS48932.2"/>
<dbReference type="RefSeq" id="NP_083583.2">
    <property type="nucleotide sequence ID" value="NM_029307.2"/>
</dbReference>
<dbReference type="SMR" id="Q9DAM3"/>
<dbReference type="FunCoup" id="Q9DAM3">
    <property type="interactions" value="637"/>
</dbReference>
<dbReference type="IntAct" id="Q9DAM3">
    <property type="interactions" value="1"/>
</dbReference>
<dbReference type="STRING" id="10090.ENSMUSP00000130551"/>
<dbReference type="iPTMnet" id="Q9DAM3"/>
<dbReference type="PhosphoSitePlus" id="Q9DAM3"/>
<dbReference type="PaxDb" id="10090-ENSMUSP00000130551"/>
<dbReference type="ProteomicsDB" id="273282"/>
<dbReference type="Antibodypedia" id="59368">
    <property type="antibodies" value="93 antibodies from 22 providers"/>
</dbReference>
<dbReference type="Ensembl" id="ENSMUST00000017976.3">
    <property type="protein sequence ID" value="ENSMUSP00000017976.3"/>
    <property type="gene ID" value="ENSMUSG00000017832.3"/>
</dbReference>
<dbReference type="GeneID" id="75482"/>
<dbReference type="KEGG" id="mmu:75482"/>
<dbReference type="AGR" id="MGI:1922732"/>
<dbReference type="CTD" id="94086"/>
<dbReference type="MGI" id="MGI:1922732">
    <property type="gene designation" value="Hspb9"/>
</dbReference>
<dbReference type="VEuPathDB" id="HostDB:ENSMUSG00000017832"/>
<dbReference type="eggNOG" id="KOG3591">
    <property type="taxonomic scope" value="Eukaryota"/>
</dbReference>
<dbReference type="GeneTree" id="ENSGT00510000049735"/>
<dbReference type="InParanoid" id="Q9DAM3"/>
<dbReference type="OrthoDB" id="8946669at2759"/>
<dbReference type="PhylomeDB" id="Q9DAM3"/>
<dbReference type="BioGRID-ORCS" id="75482">
    <property type="hits" value="3 hits in 78 CRISPR screens"/>
</dbReference>
<dbReference type="ChiTaRS" id="Hspb9">
    <property type="organism name" value="mouse"/>
</dbReference>
<dbReference type="PRO" id="PR:Q9DAM3"/>
<dbReference type="Proteomes" id="UP000000589">
    <property type="component" value="Chromosome 11"/>
</dbReference>
<dbReference type="RNAct" id="Q9DAM3">
    <property type="molecule type" value="protein"/>
</dbReference>
<dbReference type="Bgee" id="ENSMUSG00000017832">
    <property type="expression patterns" value="Expressed in seminiferous tubule of testis and 33 other cell types or tissues"/>
</dbReference>
<dbReference type="ExpressionAtlas" id="Q9DAM3">
    <property type="expression patterns" value="baseline and differential"/>
</dbReference>
<dbReference type="GO" id="GO:0005737">
    <property type="term" value="C:cytoplasm"/>
    <property type="evidence" value="ECO:0000250"/>
    <property type="project" value="UniProtKB"/>
</dbReference>
<dbReference type="GO" id="GO:0005634">
    <property type="term" value="C:nucleus"/>
    <property type="evidence" value="ECO:0000250"/>
    <property type="project" value="UniProtKB"/>
</dbReference>
<dbReference type="CDD" id="cd06481">
    <property type="entry name" value="ACD_HspB9_like"/>
    <property type="match status" value="1"/>
</dbReference>
<dbReference type="FunFam" id="2.60.40.790:FF:000113">
    <property type="match status" value="1"/>
</dbReference>
<dbReference type="Gene3D" id="2.60.40.790">
    <property type="match status" value="1"/>
</dbReference>
<dbReference type="InterPro" id="IPR002068">
    <property type="entry name" value="A-crystallin/Hsp20_dom"/>
</dbReference>
<dbReference type="InterPro" id="IPR008978">
    <property type="entry name" value="HSP20-like_chaperone"/>
</dbReference>
<dbReference type="InterPro" id="IPR042940">
    <property type="entry name" value="HSPB9"/>
</dbReference>
<dbReference type="PANTHER" id="PTHR47896">
    <property type="entry name" value="HEAT SHOCK PROTEIN BETA-9"/>
    <property type="match status" value="1"/>
</dbReference>
<dbReference type="PANTHER" id="PTHR47896:SF1">
    <property type="entry name" value="HEAT SHOCK PROTEIN BETA-9"/>
    <property type="match status" value="1"/>
</dbReference>
<dbReference type="Pfam" id="PF00011">
    <property type="entry name" value="HSP20"/>
    <property type="match status" value="1"/>
</dbReference>
<dbReference type="SUPFAM" id="SSF49764">
    <property type="entry name" value="HSP20-like chaperones"/>
    <property type="match status" value="1"/>
</dbReference>
<dbReference type="PROSITE" id="PS01031">
    <property type="entry name" value="SHSP"/>
    <property type="match status" value="1"/>
</dbReference>